<protein>
    <recommendedName>
        <fullName evidence="1">Acetyl-coenzyme A carboxylase carboxyl transferase subunit beta</fullName>
        <shortName evidence="1">ACCase subunit beta</shortName>
        <shortName evidence="1">Acetyl-CoA carboxylase carboxyltransferase subunit beta</shortName>
        <ecNumber evidence="1">2.1.3.15</ecNumber>
    </recommendedName>
</protein>
<organism>
    <name type="scientific">Yersinia pestis (strain Pestoides F)</name>
    <dbReference type="NCBI Taxonomy" id="386656"/>
    <lineage>
        <taxon>Bacteria</taxon>
        <taxon>Pseudomonadati</taxon>
        <taxon>Pseudomonadota</taxon>
        <taxon>Gammaproteobacteria</taxon>
        <taxon>Enterobacterales</taxon>
        <taxon>Yersiniaceae</taxon>
        <taxon>Yersinia</taxon>
    </lineage>
</organism>
<sequence>MSWIERILNKSNITQTRKAGIPEGVWTKCDSCGQVLYRAELERNLEVCPKCDHHMRMSARARLHMLLDAGSEVELGSELEPKDILKFRDSKKYKDRISAAQKDTGEKDALVAMKGTLQGMPIVAASFEFAFMGGSMASVVGARFVRAVEQALEDNCPLVCFSSSGGARMQEALMSLMQMAKTSAALAKMQERGLPYISVLTDPTMGGVSASLAMLGDINIAEPKALIGFAGPRVIEQTVREKLPPGFQRSEFLIEKGAIDMIVRRPVMRQTLASILSKLTHQPQPSVVESKADTVAQPENQADV</sequence>
<evidence type="ECO:0000255" key="1">
    <source>
        <dbReference type="HAMAP-Rule" id="MF_01395"/>
    </source>
</evidence>
<evidence type="ECO:0000255" key="2">
    <source>
        <dbReference type="PROSITE-ProRule" id="PRU01136"/>
    </source>
</evidence>
<dbReference type="EC" id="2.1.3.15" evidence="1"/>
<dbReference type="EMBL" id="CP000668">
    <property type="protein sequence ID" value="ABP40374.1"/>
    <property type="molecule type" value="Genomic_DNA"/>
</dbReference>
<dbReference type="RefSeq" id="WP_011906305.1">
    <property type="nucleotide sequence ID" value="NZ_CP009715.1"/>
</dbReference>
<dbReference type="SMR" id="A4TM62"/>
<dbReference type="KEGG" id="ypp:YPDSF_1993"/>
<dbReference type="PATRIC" id="fig|386656.14.peg.3462"/>
<dbReference type="UniPathway" id="UPA00655">
    <property type="reaction ID" value="UER00711"/>
</dbReference>
<dbReference type="GO" id="GO:0009329">
    <property type="term" value="C:acetate CoA-transferase complex"/>
    <property type="evidence" value="ECO:0007669"/>
    <property type="project" value="TreeGrafter"/>
</dbReference>
<dbReference type="GO" id="GO:0003989">
    <property type="term" value="F:acetyl-CoA carboxylase activity"/>
    <property type="evidence" value="ECO:0007669"/>
    <property type="project" value="InterPro"/>
</dbReference>
<dbReference type="GO" id="GO:0005524">
    <property type="term" value="F:ATP binding"/>
    <property type="evidence" value="ECO:0007669"/>
    <property type="project" value="UniProtKB-KW"/>
</dbReference>
<dbReference type="GO" id="GO:0016743">
    <property type="term" value="F:carboxyl- or carbamoyltransferase activity"/>
    <property type="evidence" value="ECO:0007669"/>
    <property type="project" value="UniProtKB-UniRule"/>
</dbReference>
<dbReference type="GO" id="GO:0008270">
    <property type="term" value="F:zinc ion binding"/>
    <property type="evidence" value="ECO:0007669"/>
    <property type="project" value="UniProtKB-UniRule"/>
</dbReference>
<dbReference type="GO" id="GO:0006633">
    <property type="term" value="P:fatty acid biosynthetic process"/>
    <property type="evidence" value="ECO:0007669"/>
    <property type="project" value="UniProtKB-KW"/>
</dbReference>
<dbReference type="GO" id="GO:2001295">
    <property type="term" value="P:malonyl-CoA biosynthetic process"/>
    <property type="evidence" value="ECO:0007669"/>
    <property type="project" value="UniProtKB-UniRule"/>
</dbReference>
<dbReference type="FunFam" id="3.90.226.10:FF:000013">
    <property type="entry name" value="Acetyl-coenzyme A carboxylase carboxyl transferase subunit beta"/>
    <property type="match status" value="1"/>
</dbReference>
<dbReference type="Gene3D" id="3.90.226.10">
    <property type="entry name" value="2-enoyl-CoA Hydratase, Chain A, domain 1"/>
    <property type="match status" value="1"/>
</dbReference>
<dbReference type="HAMAP" id="MF_01395">
    <property type="entry name" value="AcetylCoA_CT_beta"/>
    <property type="match status" value="1"/>
</dbReference>
<dbReference type="InterPro" id="IPR034733">
    <property type="entry name" value="AcCoA_carboxyl_beta"/>
</dbReference>
<dbReference type="InterPro" id="IPR000438">
    <property type="entry name" value="Acetyl_CoA_COase_Trfase_b_su"/>
</dbReference>
<dbReference type="InterPro" id="IPR029045">
    <property type="entry name" value="ClpP/crotonase-like_dom_sf"/>
</dbReference>
<dbReference type="InterPro" id="IPR011762">
    <property type="entry name" value="COA_CT_N"/>
</dbReference>
<dbReference type="InterPro" id="IPR041010">
    <property type="entry name" value="Znf-ACC"/>
</dbReference>
<dbReference type="NCBIfam" id="TIGR00515">
    <property type="entry name" value="accD"/>
    <property type="match status" value="1"/>
</dbReference>
<dbReference type="PANTHER" id="PTHR42995">
    <property type="entry name" value="ACETYL-COENZYME A CARBOXYLASE CARBOXYL TRANSFERASE SUBUNIT BETA, CHLOROPLASTIC"/>
    <property type="match status" value="1"/>
</dbReference>
<dbReference type="PANTHER" id="PTHR42995:SF5">
    <property type="entry name" value="ACETYL-COENZYME A CARBOXYLASE CARBOXYL TRANSFERASE SUBUNIT BETA, CHLOROPLASTIC"/>
    <property type="match status" value="1"/>
</dbReference>
<dbReference type="Pfam" id="PF01039">
    <property type="entry name" value="Carboxyl_trans"/>
    <property type="match status" value="1"/>
</dbReference>
<dbReference type="Pfam" id="PF17848">
    <property type="entry name" value="Zn_ribbon_ACC"/>
    <property type="match status" value="1"/>
</dbReference>
<dbReference type="PRINTS" id="PR01070">
    <property type="entry name" value="ACCCTRFRASEB"/>
</dbReference>
<dbReference type="SUPFAM" id="SSF52096">
    <property type="entry name" value="ClpP/crotonase"/>
    <property type="match status" value="1"/>
</dbReference>
<dbReference type="PROSITE" id="PS50980">
    <property type="entry name" value="COA_CT_NTER"/>
    <property type="match status" value="1"/>
</dbReference>
<comment type="function">
    <text evidence="1">Component of the acetyl coenzyme A carboxylase (ACC) complex. Biotin carboxylase (BC) catalyzes the carboxylation of biotin on its carrier protein (BCCP) and then the CO(2) group is transferred by the transcarboxylase to acetyl-CoA to form malonyl-CoA.</text>
</comment>
<comment type="catalytic activity">
    <reaction evidence="1">
        <text>N(6)-carboxybiotinyl-L-lysyl-[protein] + acetyl-CoA = N(6)-biotinyl-L-lysyl-[protein] + malonyl-CoA</text>
        <dbReference type="Rhea" id="RHEA:54728"/>
        <dbReference type="Rhea" id="RHEA-COMP:10505"/>
        <dbReference type="Rhea" id="RHEA-COMP:10506"/>
        <dbReference type="ChEBI" id="CHEBI:57288"/>
        <dbReference type="ChEBI" id="CHEBI:57384"/>
        <dbReference type="ChEBI" id="CHEBI:83144"/>
        <dbReference type="ChEBI" id="CHEBI:83145"/>
        <dbReference type="EC" id="2.1.3.15"/>
    </reaction>
</comment>
<comment type="cofactor">
    <cofactor evidence="1">
        <name>Zn(2+)</name>
        <dbReference type="ChEBI" id="CHEBI:29105"/>
    </cofactor>
    <text evidence="1">Binds 1 zinc ion per subunit.</text>
</comment>
<comment type="pathway">
    <text evidence="1">Lipid metabolism; malonyl-CoA biosynthesis; malonyl-CoA from acetyl-CoA: step 1/1.</text>
</comment>
<comment type="subunit">
    <text evidence="1">Acetyl-CoA carboxylase is a heterohexamer composed of biotin carboxyl carrier protein (AccB), biotin carboxylase (AccC) and two subunits each of ACCase subunit alpha (AccA) and ACCase subunit beta (AccD).</text>
</comment>
<comment type="subcellular location">
    <subcellularLocation>
        <location evidence="1">Cytoplasm</location>
    </subcellularLocation>
</comment>
<comment type="similarity">
    <text evidence="1">Belongs to the AccD/PCCB family.</text>
</comment>
<proteinExistence type="inferred from homology"/>
<name>ACCD_YERPP</name>
<keyword id="KW-0067">ATP-binding</keyword>
<keyword id="KW-0963">Cytoplasm</keyword>
<keyword id="KW-0275">Fatty acid biosynthesis</keyword>
<keyword id="KW-0276">Fatty acid metabolism</keyword>
<keyword id="KW-0444">Lipid biosynthesis</keyword>
<keyword id="KW-0443">Lipid metabolism</keyword>
<keyword id="KW-0479">Metal-binding</keyword>
<keyword id="KW-0547">Nucleotide-binding</keyword>
<keyword id="KW-0808">Transferase</keyword>
<keyword id="KW-0862">Zinc</keyword>
<keyword id="KW-0863">Zinc-finger</keyword>
<gene>
    <name evidence="1" type="primary">accD</name>
    <name type="ordered locus">YPDSF_1993</name>
</gene>
<reference key="1">
    <citation type="submission" date="2007-02" db="EMBL/GenBank/DDBJ databases">
        <title>Complete sequence of chromosome of Yersinia pestis Pestoides F.</title>
        <authorList>
            <consortium name="US DOE Joint Genome Institute"/>
            <person name="Copeland A."/>
            <person name="Lucas S."/>
            <person name="Lapidus A."/>
            <person name="Barry K."/>
            <person name="Detter J.C."/>
            <person name="Glavina del Rio T."/>
            <person name="Hammon N."/>
            <person name="Israni S."/>
            <person name="Dalin E."/>
            <person name="Tice H."/>
            <person name="Pitluck S."/>
            <person name="Di Bartolo G."/>
            <person name="Chain P."/>
            <person name="Malfatti S."/>
            <person name="Shin M."/>
            <person name="Vergez L."/>
            <person name="Schmutz J."/>
            <person name="Larimer F."/>
            <person name="Land M."/>
            <person name="Hauser L."/>
            <person name="Worsham P."/>
            <person name="Chu M."/>
            <person name="Bearden S."/>
            <person name="Garcia E."/>
            <person name="Richardson P."/>
        </authorList>
    </citation>
    <scope>NUCLEOTIDE SEQUENCE [LARGE SCALE GENOMIC DNA]</scope>
    <source>
        <strain>Pestoides F</strain>
    </source>
</reference>
<feature type="chain" id="PRO_0000359105" description="Acetyl-coenzyme A carboxylase carboxyl transferase subunit beta">
    <location>
        <begin position="1"/>
        <end position="304"/>
    </location>
</feature>
<feature type="domain" description="CoA carboxyltransferase N-terminal" evidence="2">
    <location>
        <begin position="25"/>
        <end position="294"/>
    </location>
</feature>
<feature type="zinc finger region" description="C4-type" evidence="1">
    <location>
        <begin position="29"/>
        <end position="51"/>
    </location>
</feature>
<feature type="binding site" evidence="1">
    <location>
        <position position="29"/>
    </location>
    <ligand>
        <name>Zn(2+)</name>
        <dbReference type="ChEBI" id="CHEBI:29105"/>
    </ligand>
</feature>
<feature type="binding site" evidence="1">
    <location>
        <position position="32"/>
    </location>
    <ligand>
        <name>Zn(2+)</name>
        <dbReference type="ChEBI" id="CHEBI:29105"/>
    </ligand>
</feature>
<feature type="binding site" evidence="1">
    <location>
        <position position="48"/>
    </location>
    <ligand>
        <name>Zn(2+)</name>
        <dbReference type="ChEBI" id="CHEBI:29105"/>
    </ligand>
</feature>
<feature type="binding site" evidence="1">
    <location>
        <position position="51"/>
    </location>
    <ligand>
        <name>Zn(2+)</name>
        <dbReference type="ChEBI" id="CHEBI:29105"/>
    </ligand>
</feature>
<accession>A4TM62</accession>